<dbReference type="EMBL" id="Z28375">
    <property type="protein sequence ID" value="CAA82224.1"/>
    <property type="molecule type" value="Genomic_DNA"/>
</dbReference>
<dbReference type="EMBL" id="Z28376">
    <property type="protein sequence ID" value="CAA82225.1"/>
    <property type="molecule type" value="mRNA"/>
</dbReference>
<dbReference type="EMBL" id="Z28377">
    <property type="protein sequence ID" value="CAA82226.1"/>
    <property type="molecule type" value="mRNA"/>
</dbReference>
<dbReference type="EMBL" id="BX284604">
    <property type="protein sequence ID" value="CCD63837.1"/>
    <property type="molecule type" value="Genomic_DNA"/>
</dbReference>
<dbReference type="EMBL" id="BX284604">
    <property type="protein sequence ID" value="CCQ25698.1"/>
    <property type="molecule type" value="Genomic_DNA"/>
</dbReference>
<dbReference type="PIR" id="S42793">
    <property type="entry name" value="S42793"/>
</dbReference>
<dbReference type="RefSeq" id="NP_001023406.1">
    <molecule id="G5EGC9-1"/>
    <property type="nucleotide sequence ID" value="NM_001028235.3"/>
</dbReference>
<dbReference type="RefSeq" id="NP_001263750.1">
    <property type="nucleotide sequence ID" value="NM_001276821.1"/>
</dbReference>
<dbReference type="RefSeq" id="NP_001380128.1">
    <molecule id="G5EGC9-2"/>
    <property type="nucleotide sequence ID" value="NM_001392306.1"/>
</dbReference>
<dbReference type="SMR" id="G5EGC9"/>
<dbReference type="FunCoup" id="G5EGC9">
    <property type="interactions" value="57"/>
</dbReference>
<dbReference type="IntAct" id="G5EGC9">
    <property type="interactions" value="1"/>
</dbReference>
<dbReference type="STRING" id="6239.T28H11.4a.1"/>
<dbReference type="PaxDb" id="6239-T28H11.4a"/>
<dbReference type="EnsemblMetazoa" id="T28H11.4a.1">
    <molecule id="G5EGC9-1"/>
    <property type="protein sequence ID" value="T28H11.4a.1"/>
    <property type="gene ID" value="WBGene00003976"/>
</dbReference>
<dbReference type="EnsemblMetazoa" id="T28H11.4b.1">
    <molecule id="G5EGC9-2"/>
    <property type="protein sequence ID" value="T28H11.4b.1"/>
    <property type="gene ID" value="WBGene00003976"/>
</dbReference>
<dbReference type="GeneID" id="177267"/>
<dbReference type="KEGG" id="cel:CELE_T28H11.4"/>
<dbReference type="UCSC" id="T28H11.4">
    <property type="organism name" value="c. elegans"/>
</dbReference>
<dbReference type="AGR" id="WB:WBGene00003976"/>
<dbReference type="CTD" id="177267"/>
<dbReference type="WormBase" id="T28H11.4a">
    <molecule id="G5EGC9-1"/>
    <property type="protein sequence ID" value="CE14375"/>
    <property type="gene ID" value="WBGene00003976"/>
    <property type="gene designation" value="pes-1"/>
</dbReference>
<dbReference type="WormBase" id="T28H11.4b">
    <molecule id="G5EGC9-2"/>
    <property type="protein sequence ID" value="CE48175"/>
    <property type="gene ID" value="WBGene00003976"/>
    <property type="gene designation" value="pes-1"/>
</dbReference>
<dbReference type="eggNOG" id="KOG2294">
    <property type="taxonomic scope" value="Eukaryota"/>
</dbReference>
<dbReference type="GeneTree" id="ENSGT00940000162075"/>
<dbReference type="HOGENOM" id="CLU_099179_0_0_1"/>
<dbReference type="InParanoid" id="G5EGC9"/>
<dbReference type="OMA" id="SAMNGHY"/>
<dbReference type="OrthoDB" id="5850510at2759"/>
<dbReference type="PhylomeDB" id="G5EGC9"/>
<dbReference type="Reactome" id="R-CEL-3232118">
    <property type="pathway name" value="SUMOylation of transcription factors"/>
</dbReference>
<dbReference type="PRO" id="PR:G5EGC9"/>
<dbReference type="Proteomes" id="UP000001940">
    <property type="component" value="Chromosome IV"/>
</dbReference>
<dbReference type="Bgee" id="WBGene00003976">
    <property type="expression patterns" value="Expressed in embryo and 3 other cell types or tissues"/>
</dbReference>
<dbReference type="ExpressionAtlas" id="G5EGC9">
    <property type="expression patterns" value="baseline"/>
</dbReference>
<dbReference type="GO" id="GO:0005737">
    <property type="term" value="C:cytoplasm"/>
    <property type="evidence" value="ECO:0000314"/>
    <property type="project" value="UniProtKB"/>
</dbReference>
<dbReference type="GO" id="GO:0005634">
    <property type="term" value="C:nucleus"/>
    <property type="evidence" value="ECO:0000314"/>
    <property type="project" value="UniProtKB"/>
</dbReference>
<dbReference type="GO" id="GO:0000981">
    <property type="term" value="F:DNA-binding transcription factor activity, RNA polymerase II-specific"/>
    <property type="evidence" value="ECO:0000318"/>
    <property type="project" value="GO_Central"/>
</dbReference>
<dbReference type="GO" id="GO:0000978">
    <property type="term" value="F:RNA polymerase II cis-regulatory region sequence-specific DNA binding"/>
    <property type="evidence" value="ECO:0000318"/>
    <property type="project" value="GO_Central"/>
</dbReference>
<dbReference type="GO" id="GO:0009653">
    <property type="term" value="P:anatomical structure morphogenesis"/>
    <property type="evidence" value="ECO:0000318"/>
    <property type="project" value="GO_Central"/>
</dbReference>
<dbReference type="GO" id="GO:0030154">
    <property type="term" value="P:cell differentiation"/>
    <property type="evidence" value="ECO:0000318"/>
    <property type="project" value="GO_Central"/>
</dbReference>
<dbReference type="GO" id="GO:0009792">
    <property type="term" value="P:embryo development ending in birth or egg hatching"/>
    <property type="evidence" value="ECO:0000316"/>
    <property type="project" value="WormBase"/>
</dbReference>
<dbReference type="GO" id="GO:0002119">
    <property type="term" value="P:nematode larval development"/>
    <property type="evidence" value="ECO:0000316"/>
    <property type="project" value="WormBase"/>
</dbReference>
<dbReference type="GO" id="GO:0006357">
    <property type="term" value="P:regulation of transcription by RNA polymerase II"/>
    <property type="evidence" value="ECO:0000318"/>
    <property type="project" value="GO_Central"/>
</dbReference>
<dbReference type="CDD" id="cd00059">
    <property type="entry name" value="FH_FOX"/>
    <property type="match status" value="1"/>
</dbReference>
<dbReference type="FunFam" id="1.10.10.10:FF:000946">
    <property type="entry name" value="ForKHead transcription factor family"/>
    <property type="match status" value="1"/>
</dbReference>
<dbReference type="Gene3D" id="1.10.10.10">
    <property type="entry name" value="Winged helix-like DNA-binding domain superfamily/Winged helix DNA-binding domain"/>
    <property type="match status" value="1"/>
</dbReference>
<dbReference type="InterPro" id="IPR001766">
    <property type="entry name" value="Fork_head_dom"/>
</dbReference>
<dbReference type="InterPro" id="IPR050211">
    <property type="entry name" value="FOX_domain-containing"/>
</dbReference>
<dbReference type="InterPro" id="IPR030456">
    <property type="entry name" value="TF_fork_head_CS_2"/>
</dbReference>
<dbReference type="InterPro" id="IPR036388">
    <property type="entry name" value="WH-like_DNA-bd_sf"/>
</dbReference>
<dbReference type="InterPro" id="IPR036390">
    <property type="entry name" value="WH_DNA-bd_sf"/>
</dbReference>
<dbReference type="PANTHER" id="PTHR11829">
    <property type="entry name" value="FORKHEAD BOX PROTEIN"/>
    <property type="match status" value="1"/>
</dbReference>
<dbReference type="PANTHER" id="PTHR11829:SF398">
    <property type="entry name" value="FORKHEAD BOX PROTEIN PES-1"/>
    <property type="match status" value="1"/>
</dbReference>
<dbReference type="Pfam" id="PF00250">
    <property type="entry name" value="Forkhead"/>
    <property type="match status" value="1"/>
</dbReference>
<dbReference type="PRINTS" id="PR00053">
    <property type="entry name" value="FORKHEAD"/>
</dbReference>
<dbReference type="SMART" id="SM00339">
    <property type="entry name" value="FH"/>
    <property type="match status" value="1"/>
</dbReference>
<dbReference type="SUPFAM" id="SSF46785">
    <property type="entry name" value="Winged helix' DNA-binding domain"/>
    <property type="match status" value="1"/>
</dbReference>
<dbReference type="PROSITE" id="PS00658">
    <property type="entry name" value="FORK_HEAD_2"/>
    <property type="match status" value="1"/>
</dbReference>
<dbReference type="PROSITE" id="PS50039">
    <property type="entry name" value="FORK_HEAD_3"/>
    <property type="match status" value="1"/>
</dbReference>
<gene>
    <name evidence="13" type="primary">pes-1</name>
    <name evidence="13" type="ORF">T28H11.4</name>
</gene>
<organism evidence="12">
    <name type="scientific">Caenorhabditis elegans</name>
    <dbReference type="NCBI Taxonomy" id="6239"/>
    <lineage>
        <taxon>Eukaryota</taxon>
        <taxon>Metazoa</taxon>
        <taxon>Ecdysozoa</taxon>
        <taxon>Nematoda</taxon>
        <taxon>Chromadorea</taxon>
        <taxon>Rhabditida</taxon>
        <taxon>Rhabditina</taxon>
        <taxon>Rhabditomorpha</taxon>
        <taxon>Rhabditoidea</taxon>
        <taxon>Rhabditidae</taxon>
        <taxon>Peloderinae</taxon>
        <taxon>Caenorhabditis</taxon>
    </lineage>
</organism>
<evidence type="ECO:0000250" key="1">
    <source>
        <dbReference type="UniProtKB" id="Q12952"/>
    </source>
</evidence>
<evidence type="ECO:0000255" key="2">
    <source>
        <dbReference type="PROSITE-ProRule" id="PRU00089"/>
    </source>
</evidence>
<evidence type="ECO:0000256" key="3">
    <source>
        <dbReference type="SAM" id="MobiDB-lite"/>
    </source>
</evidence>
<evidence type="ECO:0000269" key="4">
    <source>
    </source>
</evidence>
<evidence type="ECO:0000269" key="5">
    <source>
    </source>
</evidence>
<evidence type="ECO:0000269" key="6">
    <source>
    </source>
</evidence>
<evidence type="ECO:0000303" key="7">
    <source>
    </source>
</evidence>
<evidence type="ECO:0000305" key="8"/>
<evidence type="ECO:0000312" key="9">
    <source>
        <dbReference type="EMBL" id="CAA82224.1"/>
    </source>
</evidence>
<evidence type="ECO:0000312" key="10">
    <source>
        <dbReference type="EMBL" id="CAA82225.1"/>
    </source>
</evidence>
<evidence type="ECO:0000312" key="11">
    <source>
        <dbReference type="EMBL" id="CAA82226.1"/>
    </source>
</evidence>
<evidence type="ECO:0000312" key="12">
    <source>
        <dbReference type="Proteomes" id="UP000001940"/>
    </source>
</evidence>
<evidence type="ECO:0000312" key="13">
    <source>
        <dbReference type="WormBase" id="T28H11.4a"/>
    </source>
</evidence>
<evidence type="ECO:0000312" key="14">
    <source>
        <dbReference type="WormBase" id="T28H11.4b"/>
    </source>
</evidence>
<reference evidence="9 10 11" key="1">
    <citation type="journal article" date="1994" name="Development">
        <title>PES-1 is expressed during early embryogenesis in Caenorhabditis elegans and has homology to the fork head family of transcription factors.</title>
        <authorList>
            <person name="Hope I.A."/>
        </authorList>
    </citation>
    <scope>NUCLEOTIDE SEQUENCE [GENOMIC DNA / MRNA]</scope>
    <scope>DEVELOPMENTAL STAGE</scope>
    <source>
        <strain evidence="9 10 11">Bristol N2</strain>
    </source>
</reference>
<reference evidence="12" key="2">
    <citation type="journal article" date="1998" name="Science">
        <title>Genome sequence of the nematode C. elegans: a platform for investigating biology.</title>
        <authorList>
            <consortium name="The C. elegans sequencing consortium"/>
        </authorList>
    </citation>
    <scope>NUCLEOTIDE SEQUENCE [LARGE SCALE GENOMIC DNA]</scope>
    <source>
        <strain evidence="12">Bristol N2</strain>
    </source>
</reference>
<reference evidence="8" key="3">
    <citation type="journal article" date="1999" name="Genetics">
        <title>Complexity of developmental control: analysis of embryonic cell lineage specification in Caenorhabditis elegans using pes-1 as an early marker.</title>
        <authorList>
            <person name="Molin L."/>
            <person name="Schnabel H."/>
            <person name="Kaletta T."/>
            <person name="Feichtinger R."/>
            <person name="Hope I.A."/>
            <person name="Schnabel R."/>
        </authorList>
    </citation>
    <scope>DEVELOPMENTAL STAGE</scope>
</reference>
<reference evidence="8" key="4">
    <citation type="journal article" date="2000" name="Development">
        <title>Evolutionary conservation of redundancy between a diverged pair of forkhead transcription factor homologues.</title>
        <authorList>
            <person name="Molin L."/>
            <person name="Mounsey A."/>
            <person name="Aslam S."/>
            <person name="Bauer P."/>
            <person name="Young J."/>
            <person name="James M."/>
            <person name="Sharma-Oates A."/>
            <person name="Hope I.A."/>
        </authorList>
    </citation>
    <scope>FUNCTION</scope>
    <scope>DISRUPTION PHENOTYPE</scope>
</reference>
<sequence length="264" mass="29481">MTSSIKSDAPQFLLDLDNCSSLPPTPPKTASPGNSKMKGFNISDLCLDLDSSTSSSCSVSPASSFHTRSESVGQQQSGRNSPVSSSTESPTKRPKYSYNALIAMAIQSSPFKSLRVSEIYKYISSNFSYYKNQKPLQWQNSVRHNLSLHKEFRKVRTLDGKGSYWAMTADLGTDVYISNNCGKLRRQKSKVAKFPPMQQHFPIPQLPTQNIHQLCMQNPQILATLLQNMYLQNMQNLQNIPMVPGFPIIPVPINPTSFHFPKSS</sequence>
<feature type="chain" id="PRO_0000455281" description="Forkhead box protein pes-1">
    <location>
        <begin position="1"/>
        <end position="264"/>
    </location>
</feature>
<feature type="DNA-binding region" description="Fork-head" evidence="2">
    <location>
        <begin position="93"/>
        <end position="186"/>
    </location>
</feature>
<feature type="region of interest" description="Disordered" evidence="3">
    <location>
        <begin position="15"/>
        <end position="36"/>
    </location>
</feature>
<feature type="region of interest" description="Disordered" evidence="3">
    <location>
        <begin position="50"/>
        <end position="93"/>
    </location>
</feature>
<feature type="compositionally biased region" description="Low complexity" evidence="3">
    <location>
        <begin position="50"/>
        <end position="64"/>
    </location>
</feature>
<feature type="compositionally biased region" description="Polar residues" evidence="3">
    <location>
        <begin position="70"/>
        <end position="89"/>
    </location>
</feature>
<feature type="splice variant" id="VSP_061478" description="In isoform b." evidence="7">
    <location>
        <begin position="1"/>
        <end position="36"/>
    </location>
</feature>
<proteinExistence type="evidence at transcript level"/>
<keyword id="KW-0025">Alternative splicing</keyword>
<keyword id="KW-0963">Cytoplasm</keyword>
<keyword id="KW-0238">DNA-binding</keyword>
<keyword id="KW-0539">Nucleus</keyword>
<keyword id="KW-1185">Reference proteome</keyword>
<keyword id="KW-0804">Transcription</keyword>
<keyword id="KW-0805">Transcription regulation</keyword>
<name>PES1_CAEEL</name>
<protein>
    <recommendedName>
        <fullName evidence="8">Forkhead box protein pes-1</fullName>
    </recommendedName>
    <alternativeName>
        <fullName evidence="7">Pattern expression site 1</fullName>
    </alternativeName>
</protein>
<comment type="function">
    <text evidence="1 4">Transcription factor (By similarity). Plays a role in embryogenesis and later development, perhaps acting redundantly with forkhead protein fkh-2 (PubMed:11044397).</text>
</comment>
<comment type="subcellular location">
    <subcellularLocation>
        <location evidence="2 5">Nucleus</location>
    </subcellularLocation>
    <subcellularLocation>
        <location evidence="5">Cytoplasm</location>
    </subcellularLocation>
</comment>
<comment type="alternative products">
    <event type="alternative splicing"/>
    <isoform>
        <id>G5EGC9-1</id>
        <name evidence="13">a</name>
        <sequence type="displayed"/>
    </isoform>
    <isoform>
        <id>G5EGC9-2</id>
        <name evidence="14">b</name>
        <sequence type="described" ref="VSP_061478"/>
    </isoform>
</comment>
<comment type="developmental stage">
    <text evidence="5 6">First expressed during embryogenesis in the AB lineage, as the lineage increases from 16 to 32 cells (PubMed:8162851, PubMed:9872954). Expression in the AB lineage diminishes around the 168 cell embryo stage and the expression pattern becomes symmetrical about the embryo's plane of bilateral symmetry (PubMed:8162851, PubMed:9872954). Also expressed in the lineage of the D founder cell initially in the 100 cell embryo (PubMed:8162851, PubMed:9872954). As embryonic elongation commences, expressed in Z1 and Z4 cells; this expression increases during the rest of embryogenesis and disappears shortly after hatching (PubMed:8162851). Expressed in the MS lineage, specifically in MSaaa and MSaap at the 51-cell stage (PubMed:9872954).</text>
</comment>
<comment type="disruption phenotype">
    <text evidence="4">RNAi-mediated knockdown by injection into adults has little or no phenotypic effect (PubMed:11044397). However, simultaneous knockdown of forkhead gene fkh-2 causes 12% of eggs produced by hermaphrodites to arrest development at late stages of embryogenesis and 81% arrest after hatching as L1 stage larvae (PubMed:11044397).</text>
</comment>
<accession>G5EGC9</accession>
<accession>Q7JMT8</accession>